<reference key="1">
    <citation type="journal article" date="1996" name="Genomics">
        <title>Cloning, mapping, and in vivo localization of a human member of the PKCI-1 protein family (PRKCNH1).</title>
        <authorList>
            <person name="Brzoska P.M."/>
            <person name="Chen H."/>
            <person name="Levin N.A."/>
            <person name="Kuo W.L."/>
            <person name="Collins C."/>
            <person name="Fu K.K."/>
            <person name="Gray J.W."/>
            <person name="Christman M.F."/>
        </authorList>
    </citation>
    <scope>NUCLEOTIDE SEQUENCE [MRNA]</scope>
    <scope>SUBCELLULAR LOCATION</scope>
</reference>
<reference key="2">
    <citation type="journal article" date="1995" name="Proc. Natl. Acad. Sci. U.S.A.">
        <title>The product of the ataxia-telangiectasia group D complementing gene, ATDC, interacts with a protein kinase C substrate and inhibitor.</title>
        <authorList>
            <person name="Brzoska P.M."/>
            <person name="Chen H."/>
            <person name="Zhu Y."/>
            <person name="Levin N.A."/>
            <person name="Disatnik M.H."/>
            <person name="Mochly-Rosen D."/>
            <person name="Murnane J.P."/>
            <person name="Christman M.F."/>
        </authorList>
    </citation>
    <scope>NUCLEOTIDE SEQUENCE [MRNA]</scope>
</reference>
<reference key="3">
    <citation type="journal article" date="2004" name="Nat. Genet.">
        <title>Complete sequencing and characterization of 21,243 full-length human cDNAs.</title>
        <authorList>
            <person name="Ota T."/>
            <person name="Suzuki Y."/>
            <person name="Nishikawa T."/>
            <person name="Otsuki T."/>
            <person name="Sugiyama T."/>
            <person name="Irie R."/>
            <person name="Wakamatsu A."/>
            <person name="Hayashi K."/>
            <person name="Sato H."/>
            <person name="Nagai K."/>
            <person name="Kimura K."/>
            <person name="Makita H."/>
            <person name="Sekine M."/>
            <person name="Obayashi M."/>
            <person name="Nishi T."/>
            <person name="Shibahara T."/>
            <person name="Tanaka T."/>
            <person name="Ishii S."/>
            <person name="Yamamoto J."/>
            <person name="Saito K."/>
            <person name="Kawai Y."/>
            <person name="Isono Y."/>
            <person name="Nakamura Y."/>
            <person name="Nagahari K."/>
            <person name="Murakami K."/>
            <person name="Yasuda T."/>
            <person name="Iwayanagi T."/>
            <person name="Wagatsuma M."/>
            <person name="Shiratori A."/>
            <person name="Sudo H."/>
            <person name="Hosoiri T."/>
            <person name="Kaku Y."/>
            <person name="Kodaira H."/>
            <person name="Kondo H."/>
            <person name="Sugawara M."/>
            <person name="Takahashi M."/>
            <person name="Kanda K."/>
            <person name="Yokoi T."/>
            <person name="Furuya T."/>
            <person name="Kikkawa E."/>
            <person name="Omura Y."/>
            <person name="Abe K."/>
            <person name="Kamihara K."/>
            <person name="Katsuta N."/>
            <person name="Sato K."/>
            <person name="Tanikawa M."/>
            <person name="Yamazaki M."/>
            <person name="Ninomiya K."/>
            <person name="Ishibashi T."/>
            <person name="Yamashita H."/>
            <person name="Murakawa K."/>
            <person name="Fujimori K."/>
            <person name="Tanai H."/>
            <person name="Kimata M."/>
            <person name="Watanabe M."/>
            <person name="Hiraoka S."/>
            <person name="Chiba Y."/>
            <person name="Ishida S."/>
            <person name="Ono Y."/>
            <person name="Takiguchi S."/>
            <person name="Watanabe S."/>
            <person name="Yosida M."/>
            <person name="Hotuta T."/>
            <person name="Kusano J."/>
            <person name="Kanehori K."/>
            <person name="Takahashi-Fujii A."/>
            <person name="Hara H."/>
            <person name="Tanase T.-O."/>
            <person name="Nomura Y."/>
            <person name="Togiya S."/>
            <person name="Komai F."/>
            <person name="Hara R."/>
            <person name="Takeuchi K."/>
            <person name="Arita M."/>
            <person name="Imose N."/>
            <person name="Musashino K."/>
            <person name="Yuuki H."/>
            <person name="Oshima A."/>
            <person name="Sasaki N."/>
            <person name="Aotsuka S."/>
            <person name="Yoshikawa Y."/>
            <person name="Matsunawa H."/>
            <person name="Ichihara T."/>
            <person name="Shiohata N."/>
            <person name="Sano S."/>
            <person name="Moriya S."/>
            <person name="Momiyama H."/>
            <person name="Satoh N."/>
            <person name="Takami S."/>
            <person name="Terashima Y."/>
            <person name="Suzuki O."/>
            <person name="Nakagawa S."/>
            <person name="Senoh A."/>
            <person name="Mizoguchi H."/>
            <person name="Goto Y."/>
            <person name="Shimizu F."/>
            <person name="Wakebe H."/>
            <person name="Hishigaki H."/>
            <person name="Watanabe T."/>
            <person name="Sugiyama A."/>
            <person name="Takemoto M."/>
            <person name="Kawakami B."/>
            <person name="Yamazaki M."/>
            <person name="Watanabe K."/>
            <person name="Kumagai A."/>
            <person name="Itakura S."/>
            <person name="Fukuzumi Y."/>
            <person name="Fujimori Y."/>
            <person name="Komiyama M."/>
            <person name="Tashiro H."/>
            <person name="Tanigami A."/>
            <person name="Fujiwara T."/>
            <person name="Ono T."/>
            <person name="Yamada K."/>
            <person name="Fujii Y."/>
            <person name="Ozaki K."/>
            <person name="Hirao M."/>
            <person name="Ohmori Y."/>
            <person name="Kawabata A."/>
            <person name="Hikiji T."/>
            <person name="Kobatake N."/>
            <person name="Inagaki H."/>
            <person name="Ikema Y."/>
            <person name="Okamoto S."/>
            <person name="Okitani R."/>
            <person name="Kawakami T."/>
            <person name="Noguchi S."/>
            <person name="Itoh T."/>
            <person name="Shigeta K."/>
            <person name="Senba T."/>
            <person name="Matsumura K."/>
            <person name="Nakajima Y."/>
            <person name="Mizuno T."/>
            <person name="Morinaga M."/>
            <person name="Sasaki M."/>
            <person name="Togashi T."/>
            <person name="Oyama M."/>
            <person name="Hata H."/>
            <person name="Watanabe M."/>
            <person name="Komatsu T."/>
            <person name="Mizushima-Sugano J."/>
            <person name="Satoh T."/>
            <person name="Shirai Y."/>
            <person name="Takahashi Y."/>
            <person name="Nakagawa K."/>
            <person name="Okumura K."/>
            <person name="Nagase T."/>
            <person name="Nomura N."/>
            <person name="Kikuchi H."/>
            <person name="Masuho Y."/>
            <person name="Yamashita R."/>
            <person name="Nakai K."/>
            <person name="Yada T."/>
            <person name="Nakamura Y."/>
            <person name="Ohara O."/>
            <person name="Isogai T."/>
            <person name="Sugano S."/>
        </authorList>
    </citation>
    <scope>NUCLEOTIDE SEQUENCE [LARGE SCALE MRNA]</scope>
</reference>
<reference key="4">
    <citation type="submission" date="2004-06" db="EMBL/GenBank/DDBJ databases">
        <title>Cloning of human full open reading frames in Gateway(TM) system entry vector (pDONR201).</title>
        <authorList>
            <person name="Ebert L."/>
            <person name="Schick M."/>
            <person name="Neubert P."/>
            <person name="Schatten R."/>
            <person name="Henze S."/>
            <person name="Korn B."/>
        </authorList>
    </citation>
    <scope>NUCLEOTIDE SEQUENCE [LARGE SCALE MRNA]</scope>
</reference>
<reference key="5">
    <citation type="journal article" date="2004" name="Genome Res.">
        <title>The status, quality, and expansion of the NIH full-length cDNA project: the Mammalian Gene Collection (MGC).</title>
        <authorList>
            <consortium name="The MGC Project Team"/>
        </authorList>
    </citation>
    <scope>NUCLEOTIDE SEQUENCE [LARGE SCALE MRNA]</scope>
    <source>
        <tissue>Cervix</tissue>
        <tissue>Prostate</tissue>
    </source>
</reference>
<reference key="6">
    <citation type="journal article" date="1996" name="Proc. Natl. Acad. Sci. U.S.A.">
        <title>Three-dimensional structure of human protein kinase C interacting protein 1, a member of the HIT family of proteins.</title>
        <authorList>
            <person name="Lima C.D."/>
            <person name="Klein M.G."/>
            <person name="Weinstein I.B."/>
            <person name="Hendrickson W.A."/>
        </authorList>
    </citation>
    <scope>NUCLEOTIDE SEQUENCE [MRNA]</scope>
    <scope>X-RAY CRYSTALLOGRAPHY (2.0 ANGSTROMS)</scope>
    <scope>SUBUNIT</scope>
</reference>
<reference key="7">
    <citation type="journal article" date="2003" name="Nat. Biotechnol.">
        <title>Exploring proteomes and analyzing protein processing by mass spectrometric identification of sorted N-terminal peptides.</title>
        <authorList>
            <person name="Gevaert K."/>
            <person name="Goethals M."/>
            <person name="Martens L."/>
            <person name="Van Damme J."/>
            <person name="Staes A."/>
            <person name="Thomas G.R."/>
            <person name="Vandekerckhove J."/>
        </authorList>
    </citation>
    <scope>PROTEIN SEQUENCE OF 2-24</scope>
    <source>
        <tissue>Platelet</tissue>
    </source>
</reference>
<reference key="8">
    <citation type="journal article" date="1998" name="Exp. Cell Res.">
        <title>Characterization of PKCI and comparative studies with FHIT, related members of the HIT protein family.</title>
        <authorList>
            <person name="Klein M.G."/>
            <person name="Yao Y."/>
            <person name="Slosberg E.D."/>
            <person name="Lima C.D."/>
            <person name="Doki Y."/>
            <person name="Weinstein I.B."/>
        </authorList>
    </citation>
    <scope>SUBCELLULAR LOCATION</scope>
</reference>
<reference key="9">
    <citation type="journal article" date="2000" name="J. Biol. Chem.">
        <title>Interactions of Cdk7 and Kin28 with Hint/PKCI-1 and Hnt1 histidine triad proteins.</title>
        <authorList>
            <person name="Korsisaari N."/>
            <person name="Makela T.P."/>
        </authorList>
    </citation>
    <scope>INTERACTION WITH CDK7</scope>
    <scope>SUBCELLULAR LOCATION</scope>
</reference>
<reference key="10">
    <citation type="journal article" date="2005" name="J. Biol. Chem.">
        <title>31P NMR and genetic analysis establish hinT as the only Escherchia coli purine nucleoside phosphoramidase and as essential for growth under high salt conditions.</title>
        <authorList>
            <person name="Chou T.F."/>
            <person name="Bieganowski P."/>
            <person name="Shilinski K."/>
            <person name="Cheng J."/>
            <person name="Brenner C."/>
            <person name="Wagner C.R."/>
        </authorList>
    </citation>
    <scope>CATALYTIC ACTIVITY</scope>
    <scope>FUNCTION</scope>
    <scope>SUBUNIT</scope>
</reference>
<reference key="11">
    <citation type="journal article" date="2005" name="J. Cell Sci.">
        <title>The histidine triad protein Hint1 interacts with Pontin and Reptin and inhibits TCF-beta-catenin-mediated transcription.</title>
        <authorList>
            <person name="Weiske J."/>
            <person name="Huber O."/>
        </authorList>
    </citation>
    <scope>INTERACTION WITH RUVBL1 AND RUVBL2</scope>
    <scope>SUBCELLULAR LOCATION</scope>
    <scope>FUNCTION</scope>
</reference>
<reference key="12">
    <citation type="journal article" date="2006" name="J. Biol. Chem.">
        <title>The histidine triad protein Hint1 triggers apoptosis independent of its enzymatic activity.</title>
        <authorList>
            <person name="Weiske J."/>
            <person name="Huber O."/>
        </authorList>
    </citation>
    <scope>FUNCTION</scope>
    <scope>CATALYTIC ACTIVITY</scope>
    <scope>MUTAGENESIS OF GLY-105 AND SER-107</scope>
    <scope>CHARACTERIZATION OF VARIANT NMAN ASN-112</scope>
    <scope>SUBUNIT</scope>
    <scope>IDENTIFICATION IN A COMPLEX WITH KAT5</scope>
</reference>
<reference key="13">
    <citation type="journal article" date="2007" name="J. Biol. Chem.">
        <title>Engineered monomeric human histidine triad nucleotide-binding protein 1 hydrolyzes fluorogenic acyl-adenylate and lysyl-tRNA synthetase-generated lysyl-adenylate.</title>
        <authorList>
            <person name="Chou T.F."/>
            <person name="Tikh I.B."/>
            <person name="Horta B.A."/>
            <person name="Ghosh B."/>
            <person name="De Alencastro R.B."/>
            <person name="Wagner C.R."/>
        </authorList>
    </citation>
    <scope>CATALYTIC ACTIVITY</scope>
    <scope>SUBUNIT</scope>
    <scope>MUTAGENESIS OF VAL-97</scope>
    <scope>FUNCTION</scope>
    <scope>BIOPHYSICOCHEMICAL PROPERTIES</scope>
</reference>
<reference key="14">
    <citation type="journal article" date="2007" name="Mol. Pharm.">
        <title>Phosphoramidate pronucleotides: a comparison of the phosphoramidase substrate specificity of human and Escherichia coli histidine triad nucleotide binding proteins.</title>
        <authorList>
            <person name="Chou T.F."/>
            <person name="Baraniak J."/>
            <person name="Kaczmarek R."/>
            <person name="Zhou X."/>
            <person name="Cheng J."/>
            <person name="Ghosh B."/>
            <person name="Wagner C.R."/>
        </authorList>
    </citation>
    <scope>FUNCTION</scope>
    <scope>CATALYTIC ACTIVITY</scope>
</reference>
<reference key="15">
    <citation type="journal article" date="2009" name="J. Biol. Chem.">
        <title>Histidine triad nucleotide-binding protein 1 up-regulates cellular levels of p27KIP1 by targeting ScfSKP2 ubiquitin ligase and Src.</title>
        <authorList>
            <person name="Cen B."/>
            <person name="Li H."/>
            <person name="Weinstein I.B."/>
        </authorList>
    </citation>
    <scope>INTERACTION WITH CDC34 AND RBX1</scope>
    <scope>IDENTIFICATION IN A UBIQUITIN LIGASE COMPLEX</scope>
    <scope>SUBCELLULAR LOCATION</scope>
    <scope>FUNCTION</scope>
</reference>
<reference key="16">
    <citation type="journal article" date="2009" name="Science">
        <title>Lysine acetylation targets protein complexes and co-regulates major cellular functions.</title>
        <authorList>
            <person name="Choudhary C."/>
            <person name="Kumar C."/>
            <person name="Gnad F."/>
            <person name="Nielsen M.L."/>
            <person name="Rehman M."/>
            <person name="Walther T.C."/>
            <person name="Olsen J.V."/>
            <person name="Mann M."/>
        </authorList>
    </citation>
    <scope>ACETYLATION [LARGE SCALE ANALYSIS] AT LYS-21 AND LYS-30</scope>
    <scope>IDENTIFICATION BY MASS SPECTROMETRY [LARGE SCALE ANALYSIS]</scope>
</reference>
<reference key="17">
    <citation type="journal article" date="2011" name="BMC Syst. Biol.">
        <title>Initial characterization of the human central proteome.</title>
        <authorList>
            <person name="Burkard T.R."/>
            <person name="Planyavsky M."/>
            <person name="Kaupe I."/>
            <person name="Breitwieser F.P."/>
            <person name="Buerckstuemmer T."/>
            <person name="Bennett K.L."/>
            <person name="Superti-Furga G."/>
            <person name="Colinge J."/>
        </authorList>
    </citation>
    <scope>IDENTIFICATION BY MASS SPECTROMETRY [LARGE SCALE ANALYSIS]</scope>
</reference>
<reference key="18">
    <citation type="journal article" date="2012" name="Cell Cycle">
        <title>The tumor suppressor HINT1 regulates MITF and beta-catenin transcriptional activity in melanoma cells.</title>
        <authorList>
            <person name="Genovese G."/>
            <person name="Ghosh P."/>
            <person name="Li H."/>
            <person name="Rettino A."/>
            <person name="Sioletic S."/>
            <person name="Cittadini A."/>
            <person name="Sgambato A."/>
        </authorList>
    </citation>
    <scope>IDENTIFICATION IN A COMPLEX WITH MITF AND CTNNB1</scope>
    <scope>FUNCTION</scope>
</reference>
<reference key="19">
    <citation type="journal article" date="2012" name="Proc. Natl. Acad. Sci. U.S.A.">
        <title>N-terminal acetylome analyses and functional insights of the N-terminal acetyltransferase NatB.</title>
        <authorList>
            <person name="Van Damme P."/>
            <person name="Lasa M."/>
            <person name="Polevoda B."/>
            <person name="Gazquez C."/>
            <person name="Elosegui-Artola A."/>
            <person name="Kim D.S."/>
            <person name="De Juan-Pardo E."/>
            <person name="Demeyer K."/>
            <person name="Hole K."/>
            <person name="Larrea E."/>
            <person name="Timmerman E."/>
            <person name="Prieto J."/>
            <person name="Arnesen T."/>
            <person name="Sherman F."/>
            <person name="Gevaert K."/>
            <person name="Aldabe R."/>
        </authorList>
    </citation>
    <scope>ACETYLATION [LARGE SCALE ANALYSIS] AT ALA-2</scope>
    <scope>CLEAVAGE OF INITIATOR METHIONINE [LARGE SCALE ANALYSIS]</scope>
    <scope>IDENTIFICATION BY MASS SPECTROMETRY [LARGE SCALE ANALYSIS]</scope>
</reference>
<reference key="20">
    <citation type="journal article" date="2013" name="Biochemistry">
        <title>Kinetic mechanism of human histidine triad nucleotide binding protein 1.</title>
        <authorList>
            <person name="Zhou X."/>
            <person name="Chou T.F."/>
            <person name="Aubol B.E."/>
            <person name="Park C.J."/>
            <person name="Wolfenden R."/>
            <person name="Adams J."/>
            <person name="Wagner C.R."/>
        </authorList>
    </citation>
    <scope>FUNCTION</scope>
    <scope>CATALYTIC ACTIVITY</scope>
    <scope>BIOPHYSICOCHEMICAL PROPERTIES</scope>
    <scope>MUTAGENESIS OF HIS-51; HIS-110 AND HIS-114</scope>
</reference>
<reference key="21">
    <citation type="journal article" date="2014" name="J. Proteomics">
        <title>An enzyme assisted RP-RPLC approach for in-depth analysis of human liver phosphoproteome.</title>
        <authorList>
            <person name="Bian Y."/>
            <person name="Song C."/>
            <person name="Cheng K."/>
            <person name="Dong M."/>
            <person name="Wang F."/>
            <person name="Huang J."/>
            <person name="Sun D."/>
            <person name="Wang L."/>
            <person name="Ye M."/>
            <person name="Zou H."/>
        </authorList>
    </citation>
    <scope>IDENTIFICATION BY MASS SPECTROMETRY [LARGE SCALE ANALYSIS]</scope>
    <source>
        <tissue>Liver</tissue>
    </source>
</reference>
<reference key="22">
    <citation type="journal article" date="2017" name="Biochemistry">
        <title>Caught before Released: Structural Mapping of the Reaction Trajectory for the Sofosbuvir Activating Enzyme, Human Histidine Triad Nucleotide Binding Protein 1 (hHint1).</title>
        <authorList>
            <person name="Shah R."/>
            <person name="Maize K.M."/>
            <person name="Zhou X."/>
            <person name="Finzel B.C."/>
            <person name="Wagner C.R."/>
        </authorList>
    </citation>
    <scope>FUNCTION</scope>
    <scope>CATALYTIC ACTIVITY</scope>
    <scope>CHARACTERIZATION OF VARIANT NMAN ASN-112</scope>
</reference>
<reference key="23">
    <citation type="journal article" date="2018" name="J. Mol. Biol.">
        <title>Structure and Functional Characterization of Human Histidine Triad Nucleotide-Binding Protein 1 Mutations Associated with Inherited Axonal Neuropathy with Neuromyotonia.</title>
        <authorList>
            <person name="Shah R.M."/>
            <person name="Maize K.M."/>
            <person name="West H.T."/>
            <person name="Strom A.M."/>
            <person name="Finzel B.C."/>
            <person name="Wagner C.R."/>
        </authorList>
    </citation>
    <scope>FUNCTION</scope>
    <scope>CATALYTIC ACTIVITY</scope>
    <scope>SUBUNIT</scope>
    <scope>BIOPHYSICOCHEMICAL PROPERTIES</scope>
    <scope>MUTAGENESIS OF ASP-43 AND ILE-44</scope>
    <scope>CHARACTERIZATION OF VARIANTS NMAN PRO-37; ARG-84; VAL-89; ASP-93 AND ASN-112</scope>
</reference>
<reference key="24">
    <citation type="journal article" date="2019" name="Antioxid. Redox Signal.">
        <title>The Axonal Motor Neuropathy-Related HINT1 Protein Is a Zinc- and Calmodulin-Regulated Cysteine SUMO Protease.</title>
        <authorList>
            <person name="Cortes-Montero E."/>
            <person name="Rodriguez-Munoz M."/>
            <person name="Sanchez-Blazquez P."/>
            <person name="Garzon J."/>
        </authorList>
    </citation>
    <scope>FUNCTION</scope>
    <scope>CATALYTIC ACTIVITY</scope>
    <scope>MUTAGENESIS OF PHE-33; GLU-34; CYS-38; LYS-57; VAL-97 AND HIS-114</scope>
    <scope>CHARACTERIZATION OF VARIANTS NMAN PRO-37; ARG-51; ARG-84; VAL-89; ASP-93 AND ASN-112</scope>
</reference>
<reference key="25">
    <citation type="journal article" date="2019" name="Biochem. Pharmacol.">
        <title>The role of the Hint1 protein in the metabolism of phosphorothioate oligonucleotides drugs and prodrugs, and the release of H2S under cellular conditions.</title>
        <authorList>
            <person name="Krakowiak A."/>
            <person name="Piotrzkowska D."/>
            <person name="Kocon-Rebowska B."/>
            <person name="Kaczmarek R."/>
            <person name="Maciaszek A."/>
        </authorList>
    </citation>
    <scope>FUNCTION</scope>
</reference>
<reference key="26">
    <citation type="journal article" date="2020" name="FEBS Lett.">
        <title>Histidine triad nucleotide-binding proteins HINT1 and HINT2 share similar substrate specificities and little affinity for the signaling dinucleotide Ap4A.</title>
        <authorList>
            <person name="Strom A."/>
            <person name="Tong C.L."/>
            <person name="Wagner C.R."/>
        </authorList>
    </citation>
    <scope>FUNCTION</scope>
    <scope>CATALYTIC ACTIVITY</scope>
</reference>
<reference key="27">
    <citation type="journal article" date="1997" name="Science">
        <title>Structure-based analysis of catalysis and substrate definition in the HIT protein family.</title>
        <authorList>
            <person name="Lima C.D."/>
            <person name="Klein M.G."/>
            <person name="Hendrickson W.A."/>
        </authorList>
    </citation>
    <scope>X-RAY CRYSTALLOGRAPHY (1.50 ANGSTROMS) IN COMPLEXES WITH AMP; ADENOSINE METHYLENE DIPHOSPHATE AND ADENOSINE-5'-DITUNGSTATE</scope>
    <scope>SUBUNIT</scope>
</reference>
<reference evidence="29" key="28">
    <citation type="journal article" date="2012" name="Acta Crystallogr. F">
        <title>A new crystal form of human histidine triad nucleotide-binding protein 1 (hHINT1) in complex with adenosine 5'-monophosphate at 1.38 A resolution.</title>
        <authorList>
            <person name="Dolot R."/>
            <person name="Ozga M."/>
            <person name="Wlodarczyk A."/>
            <person name="Krakowiak A."/>
            <person name="Nawrot B."/>
        </authorList>
    </citation>
    <scope>X-RAY CRYSTALLOGRAPHY (1.38 ANGSTROMS) IN COMPLEX WITH AMP</scope>
    <scope>SUBUNIT</scope>
</reference>
<reference key="29">
    <citation type="journal article" date="2012" name="J. Phys. Chem. B">
        <title>Side chain independent recognition of aminoacyl adenylates by the Hint1 transcription suppressor.</title>
        <authorList>
            <person name="Wang J."/>
            <person name="Fang P."/>
            <person name="Schimmel P."/>
            <person name="Guo M."/>
        </authorList>
    </citation>
    <scope>X-RAY CRYSTALLOGRAPHY (1.52 ANGSTROMS) IN COMPLEXES WITH SUBSTRATE ANALOGS</scope>
    <scope>CATALYTIC ACTIVITY</scope>
    <scope>FUNCTION</scope>
    <scope>SUBUNIT</scope>
    <scope>MUTAGENESIS OF HIS-114 AND TRP-123</scope>
</reference>
<reference key="30">
    <citation type="journal article" date="2012" name="Nat. Genet.">
        <title>Loss-of-function mutations in HINT1 cause axonal neuropathy with neuromyotonia.</title>
        <authorList>
            <person name="Zimon M."/>
            <person name="Baets J."/>
            <person name="Almeida-Souza L."/>
            <person name="De Vriendt E."/>
            <person name="Nikodinovic J."/>
            <person name="Parman Y."/>
            <person name="Battaloglu E."/>
            <person name="Matur Z."/>
            <person name="Guergueltcheva V."/>
            <person name="Tournev I."/>
            <person name="Auer-Grumbach M."/>
            <person name="De Rijk P."/>
            <person name="Petersen B.S."/>
            <person name="Muller T."/>
            <person name="Fransen E."/>
            <person name="Van Damme P."/>
            <person name="Loscher W.N."/>
            <person name="Barisic N."/>
            <person name="Mitrovic Z."/>
            <person name="Previtali S.C."/>
            <person name="Topaloglu H."/>
            <person name="Bernert G."/>
            <person name="Beleza-Meireles A."/>
            <person name="Todorovic S."/>
            <person name="Savic-Pavicevic D."/>
            <person name="Ishpekova B."/>
            <person name="Lechner S."/>
            <person name="Peeters K."/>
            <person name="Ooms T."/>
            <person name="Hahn A.F."/>
            <person name="Zuchner S."/>
            <person name="Timmerman V."/>
            <person name="Van Dijck P."/>
            <person name="Rasic V.M."/>
            <person name="Janecke A.R."/>
            <person name="De Jonghe P."/>
            <person name="Jordanova A."/>
        </authorList>
    </citation>
    <scope>VARIANTS NMAN PRO-37; ARG-51; ARG-84; VAL-89; ASP-93 AND ASN-112</scope>
    <scope>CHARACTERIZATION OF VARIANTS NMAN PRO-37; ARG-51; ARG-84 AND ASN-112</scope>
</reference>
<protein>
    <recommendedName>
        <fullName evidence="27">Adenosine 5'-monophosphoramidase HINT1</fullName>
        <ecNumber evidence="6 8 9 10 16 17">3.9.1.-</ecNumber>
    </recommendedName>
    <alternativeName>
        <fullName evidence="28">Desumoylating isopeptidase HINT1</fullName>
        <ecNumber evidence="20">3.4.22.-</ecNumber>
    </alternativeName>
    <alternativeName>
        <fullName>Histidine triad nucleotide-binding protein 1</fullName>
    </alternativeName>
    <alternativeName>
        <fullName>Protein kinase C inhibitor 1</fullName>
    </alternativeName>
    <alternativeName>
        <fullName>Protein kinase C-interacting protein 1</fullName>
        <shortName>PKCI-1</shortName>
    </alternativeName>
</protein>
<sequence length="126" mass="13802">MADEIAKAQVARPGGDTIFGKIIRKEIPAKIIFEDDRCLAFHDISPQAPTHFLVIPKKHISQISVAEDDDESLLGHLMIVGKKCAADLGLNKGYRMVVNEGSDGGQSVYHVHLHVLGGRQMHWPPG</sequence>
<feature type="initiator methionine" description="Removed" evidence="5 31">
    <location>
        <position position="1"/>
    </location>
</feature>
<feature type="chain" id="PRO_0000109781" description="Adenosine 5'-monophosphoramidase HINT1">
    <location>
        <begin position="2"/>
        <end position="126"/>
    </location>
</feature>
<feature type="domain" description="HIT" evidence="3">
    <location>
        <begin position="18"/>
        <end position="126"/>
    </location>
</feature>
<feature type="short sequence motif" description="Histidine triad motif">
    <location>
        <begin position="110"/>
        <end position="114"/>
    </location>
</feature>
<feature type="active site" description="Tele-AMP-histidine intermediate" evidence="24">
    <location>
        <position position="112"/>
    </location>
</feature>
<feature type="binding site" evidence="14 29">
    <location>
        <begin position="43"/>
        <end position="44"/>
    </location>
    <ligand>
        <name>AMP</name>
        <dbReference type="ChEBI" id="CHEBI:456215"/>
    </ligand>
</feature>
<feature type="binding site" evidence="14 29">
    <location>
        <position position="99"/>
    </location>
    <ligand>
        <name>AMP</name>
        <dbReference type="ChEBI" id="CHEBI:456215"/>
    </ligand>
</feature>
<feature type="binding site" evidence="14 29">
    <location>
        <begin position="105"/>
        <end position="107"/>
    </location>
    <ligand>
        <name>AMP</name>
        <dbReference type="ChEBI" id="CHEBI:456215"/>
    </ligand>
</feature>
<feature type="binding site" evidence="14 29">
    <location>
        <begin position="112"/>
        <end position="114"/>
    </location>
    <ligand>
        <name>AMP</name>
        <dbReference type="ChEBI" id="CHEBI:456215"/>
    </ligand>
</feature>
<feature type="modified residue" description="N-acetylalanine" evidence="31">
    <location>
        <position position="2"/>
    </location>
</feature>
<feature type="modified residue" description="N6-acetyllysine" evidence="30">
    <location>
        <position position="21"/>
    </location>
</feature>
<feature type="modified residue" description="N6-acetyllysine" evidence="30">
    <location>
        <position position="30"/>
    </location>
</feature>
<feature type="modified residue" description="Phosphoserine" evidence="1">
    <location>
        <position position="45"/>
    </location>
</feature>
<feature type="modified residue" description="Phosphoserine" evidence="1">
    <location>
        <position position="72"/>
    </location>
</feature>
<feature type="sequence variant" id="VAR_069212" description="In NMAN; negligible protein expression due to post-translational degradation; loss of homodimerization; significant decrease in adenosine 5'-monophosphoramidase activity; reduced SUMO-specific isopeptidase activity; dbSNP:rs149782619." evidence="15 18 20">
    <original>R</original>
    <variation>P</variation>
    <location>
        <position position="37"/>
    </location>
</feature>
<feature type="sequence variant" id="VAR_069213" description="In NMAN; no mutant protein is detected due to post-translational degradation; no effect on SUMO-specific isopeptidase activity; dbSNP:rs397514491." evidence="15 20">
    <original>H</original>
    <variation>R</variation>
    <location>
        <position position="51"/>
    </location>
</feature>
<feature type="sequence variant" id="VAR_069214" description="In NMAN; negligible protein expression due to post-translational degradation; no effect on homodimerization; no effect on adenosine 5'-monophosphoramidase; no effect on affinity for tryptamine adenosine phosphoramidate; loss of SUMO-specific isopeptidase activity; dbSNP:rs397514489." evidence="15 18 20">
    <original>C</original>
    <variation>R</variation>
    <location>
        <position position="84"/>
    </location>
</feature>
<feature type="sequence variant" id="VAR_069215" description="In NMAN; no effect on homodimerization; no effect on adenosine 5'-monophosphoramidase activity; no effect on affinity for tryptamine adenosine phosphoramidate; loss of SUMO-specific isopeptidase activity; dbSNP:rs397514490." evidence="15 18 20">
    <original>G</original>
    <variation>V</variation>
    <location>
        <position position="89"/>
    </location>
</feature>
<feature type="sequence variant" id="VAR_069216" description="In NMAN; loss of homodimerization; significant decrease in adenosine 5'-monophosphoramidase activity; approximately 40-fold increased affinity for tryptamine adenosine phosphoramidate; loss of SUMO-specific isopeptidase activity; dbSNP:rs397514493." evidence="15 18 20">
    <original>G</original>
    <variation>D</variation>
    <location>
        <position position="93"/>
    </location>
</feature>
<feature type="sequence variant" id="VAR_069217" description="In NMAN; the enzyme has no residual activity although the mutant protein is expressed at normal levels; no effect on homodimerization; loss of SUMO-specific isopeptidase activity; dbSNP:rs373849532." evidence="8 15 17 18 20">
    <original>H</original>
    <variation>N</variation>
    <location>
        <position position="112"/>
    </location>
</feature>
<feature type="mutagenesis site" description="Loss of SUMO-specific isopeptidase activity." evidence="20">
    <original>F</original>
    <variation>S</variation>
    <location>
        <position position="33"/>
    </location>
</feature>
<feature type="mutagenesis site" description="Reduced SUMO-specific isopeptidase activity." evidence="20">
    <original>E</original>
    <variation>K</variation>
    <location>
        <position position="34"/>
    </location>
</feature>
<feature type="mutagenesis site" description="No effect on SUMO-specific isopeptidase activity." evidence="20">
    <original>C</original>
    <variation>R</variation>
    <location>
        <position position="38"/>
    </location>
</feature>
<feature type="mutagenesis site" description="Approximately 50-fold increased affinity for tryptamine adenosine phosphoramidate." evidence="18">
    <original>D</original>
    <variation>N</variation>
    <location>
        <position position="43"/>
    </location>
</feature>
<feature type="mutagenesis site" description="Approximately 10-fold increased affinity for tryptamine adenosine phosphoramidate." evidence="18">
    <original>I</original>
    <variation>F</variation>
    <location>
        <position position="44"/>
    </location>
</feature>
<feature type="mutagenesis site" description="Approximately 30-fold increased affinity for tryptamine adenosine phosphoramidate." evidence="18">
    <original>I</original>
    <variation>W</variation>
    <location>
        <position position="44"/>
    </location>
</feature>
<feature type="mutagenesis site" description="No effect on affinity for 3-indolepropionic acyl-adenylate but a 13.8-fold increased affinity for tryptamine adenosine phosphoramidate monoester." evidence="16">
    <original>H</original>
    <variation>A</variation>
    <location>
        <position position="51"/>
    </location>
</feature>
<feature type="mutagenesis site" description="Loss of SUMO-specific isopeptidase activity." evidence="20">
    <original>K</original>
    <variation>N</variation>
    <location>
        <position position="57"/>
    </location>
</feature>
<feature type="mutagenesis site" description="Loss of dimerization. Strongly reduced adenosine 5'-monophosphoramidase activity. A 110-fold increased affinity for 3-indolepropionic acyl-adenylate and a 100-fold increased affinity for tryptamine adenosine phosphoramidate monoester." evidence="10">
    <original>V</original>
    <variation>D</variation>
    <location>
        <position position="97"/>
    </location>
</feature>
<feature type="mutagenesis site" description="Loss of dimerization. Strongly reduced adenosine 5'-monophosphoramidase activity. A 128-fold increased affinity for 3-indolepropionic acyl-adenylate and a 1000-fold increased affinity for tryptamine adenosine phosphoramidate monoester." evidence="10">
    <original>V</original>
    <variation>E</variation>
    <location>
        <position position="97"/>
    </location>
</feature>
<feature type="mutagenesis site" description="Loss of SUMO-specific isopeptidase activity." evidence="20">
    <original>V</original>
    <variation>M</variation>
    <location>
        <position position="97"/>
    </location>
</feature>
<feature type="mutagenesis site" description="Reduces adenosine 5'-monophosphoramidase activity." evidence="8">
    <original>G</original>
    <variation>A</variation>
    <location>
        <position position="105"/>
    </location>
</feature>
<feature type="mutagenesis site" description="Reduces adenosine 5'-monophosphoramidase activity." evidence="8">
    <original>S</original>
    <variation>A</variation>
    <location>
        <position position="107"/>
    </location>
</feature>
<feature type="mutagenesis site" description="No significant effect on affinity for 3-indolepropionic acyl-adenylate and tryptamine adenosine phosphoramidate monoester." evidence="16">
    <original>H</original>
    <variation>A</variation>
    <location>
        <position position="110"/>
    </location>
</feature>
<feature type="mutagenesis site" description="Nearly abolishes adenosine 5'-monophosphoramidase activity. A 3-fold increased affinity for 3-indolepropionic acyl-adenylate and a 2-fold increased affinity for tryptamine adenosine phosphoramidate monoester." evidence="12 16">
    <original>H</original>
    <variation>A</variation>
    <location>
        <position position="114"/>
    </location>
</feature>
<feature type="mutagenesis site" description="Loss of SUMO-specific isopeptidase activity." evidence="20">
    <original>H</original>
    <variation>R</variation>
    <location>
        <position position="114"/>
    </location>
</feature>
<feature type="mutagenesis site" description="Nearly abolishes adenosine 5'-monophosphoramidase activity." evidence="12">
    <original>W</original>
    <variation>A</variation>
    <location>
        <position position="123"/>
    </location>
</feature>
<feature type="sequence conflict" description="In Ref. 3; BAB15500." evidence="26" ref="3">
    <original>K</original>
    <variation>E</variation>
    <location>
        <position position="25"/>
    </location>
</feature>
<feature type="helix" evidence="32">
    <location>
        <begin position="18"/>
        <end position="23"/>
    </location>
</feature>
<feature type="strand" evidence="32">
    <location>
        <begin position="31"/>
        <end position="34"/>
    </location>
</feature>
<feature type="strand" evidence="32">
    <location>
        <begin position="36"/>
        <end position="42"/>
    </location>
</feature>
<feature type="strand" evidence="32">
    <location>
        <begin position="47"/>
        <end position="58"/>
    </location>
</feature>
<feature type="helix" evidence="32">
    <location>
        <begin position="63"/>
        <end position="65"/>
    </location>
</feature>
<feature type="helix" evidence="32">
    <location>
        <begin position="68"/>
        <end position="70"/>
    </location>
</feature>
<feature type="helix" evidence="32">
    <location>
        <begin position="71"/>
        <end position="87"/>
    </location>
</feature>
<feature type="strand" evidence="32">
    <location>
        <begin position="94"/>
        <end position="100"/>
    </location>
</feature>
<feature type="helix" evidence="32">
    <location>
        <begin position="101"/>
        <end position="104"/>
    </location>
</feature>
<feature type="strand" evidence="32">
    <location>
        <begin position="108"/>
        <end position="110"/>
    </location>
</feature>
<feature type="strand" evidence="32">
    <location>
        <begin position="113"/>
        <end position="119"/>
    </location>
</feature>
<proteinExistence type="evidence at protein level"/>
<gene>
    <name type="primary">HINT1</name>
    <name type="synonym">HINT</name>
    <name type="synonym">PKCI1</name>
    <name type="synonym">PRKCNH1</name>
</gene>
<keyword id="KW-0002">3D-structure</keyword>
<keyword id="KW-0007">Acetylation</keyword>
<keyword id="KW-0053">Apoptosis</keyword>
<keyword id="KW-0963">Cytoplasm</keyword>
<keyword id="KW-0903">Direct protein sequencing</keyword>
<keyword id="KW-0225">Disease variant</keyword>
<keyword id="KW-0378">Hydrolase</keyword>
<keyword id="KW-0622">Neuropathy</keyword>
<keyword id="KW-0547">Nucleotide-binding</keyword>
<keyword id="KW-0539">Nucleus</keyword>
<keyword id="KW-0597">Phosphoprotein</keyword>
<keyword id="KW-0645">Protease</keyword>
<keyword id="KW-1267">Proteomics identification</keyword>
<keyword id="KW-1185">Reference proteome</keyword>
<keyword id="KW-0788">Thiol protease</keyword>
<keyword id="KW-0804">Transcription</keyword>
<keyword id="KW-0805">Transcription regulation</keyword>
<keyword id="KW-0833">Ubl conjugation pathway</keyword>
<dbReference type="EC" id="3.9.1.-" evidence="6 8 9 10 16 17"/>
<dbReference type="EC" id="3.4.22.-" evidence="20"/>
<dbReference type="EMBL" id="U27143">
    <property type="protein sequence ID" value="AAA82926.1"/>
    <property type="molecule type" value="mRNA"/>
</dbReference>
<dbReference type="EMBL" id="U51004">
    <property type="protein sequence ID" value="AAC71077.1"/>
    <property type="molecule type" value="mRNA"/>
</dbReference>
<dbReference type="EMBL" id="AK026557">
    <property type="protein sequence ID" value="BAB15500.1"/>
    <property type="molecule type" value="mRNA"/>
</dbReference>
<dbReference type="EMBL" id="CR457048">
    <property type="protein sequence ID" value="CAG33329.1"/>
    <property type="molecule type" value="mRNA"/>
</dbReference>
<dbReference type="EMBL" id="BC001287">
    <property type="protein sequence ID" value="AAH01287.1"/>
    <property type="molecule type" value="mRNA"/>
</dbReference>
<dbReference type="EMBL" id="BC007090">
    <property type="protein sequence ID" value="AAH07090.1"/>
    <property type="molecule type" value="mRNA"/>
</dbReference>
<dbReference type="CCDS" id="CCDS4147.1"/>
<dbReference type="PIR" id="S72501">
    <property type="entry name" value="S72501"/>
</dbReference>
<dbReference type="RefSeq" id="NP_005331.1">
    <property type="nucleotide sequence ID" value="NM_005340.7"/>
</dbReference>
<dbReference type="PDB" id="1AV5">
    <property type="method" value="X-ray"/>
    <property type="resolution" value="2.00 A"/>
    <property type="chains" value="A/B=2-126"/>
</dbReference>
<dbReference type="PDB" id="1KPA">
    <property type="method" value="X-ray"/>
    <property type="resolution" value="2.00 A"/>
    <property type="chains" value="A/B=2-126"/>
</dbReference>
<dbReference type="PDB" id="1KPB">
    <property type="method" value="X-ray"/>
    <property type="resolution" value="2.00 A"/>
    <property type="chains" value="A/B=2-126"/>
</dbReference>
<dbReference type="PDB" id="1KPC">
    <property type="method" value="X-ray"/>
    <property type="resolution" value="2.20 A"/>
    <property type="chains" value="A/B/C/D=2-126"/>
</dbReference>
<dbReference type="PDB" id="1KPE">
    <property type="method" value="X-ray"/>
    <property type="resolution" value="1.80 A"/>
    <property type="chains" value="A/B=2-126"/>
</dbReference>
<dbReference type="PDB" id="1KPF">
    <property type="method" value="X-ray"/>
    <property type="resolution" value="1.50 A"/>
    <property type="chains" value="A=2-126"/>
</dbReference>
<dbReference type="PDB" id="3TW2">
    <property type="method" value="X-ray"/>
    <property type="resolution" value="1.38 A"/>
    <property type="chains" value="A/B=1-126"/>
</dbReference>
<dbReference type="PDB" id="4EQE">
    <property type="method" value="X-ray"/>
    <property type="resolution" value="1.52 A"/>
    <property type="chains" value="A/B=1-126"/>
</dbReference>
<dbReference type="PDB" id="4EQG">
    <property type="method" value="X-ray"/>
    <property type="resolution" value="1.52 A"/>
    <property type="chains" value="A/B=1-126"/>
</dbReference>
<dbReference type="PDB" id="4EQH">
    <property type="method" value="X-ray"/>
    <property type="resolution" value="1.67 A"/>
    <property type="chains" value="A/B=1-126"/>
</dbReference>
<dbReference type="PDB" id="4ZKL">
    <property type="method" value="X-ray"/>
    <property type="resolution" value="2.34 A"/>
    <property type="chains" value="A/B/C/D=1-126"/>
</dbReference>
<dbReference type="PDB" id="4ZKV">
    <property type="method" value="X-ray"/>
    <property type="resolution" value="1.92 A"/>
    <property type="chains" value="A/B/C/D=1-126"/>
</dbReference>
<dbReference type="PDB" id="5ED3">
    <property type="method" value="X-ray"/>
    <property type="resolution" value="1.31 A"/>
    <property type="chains" value="A/B=1-126"/>
</dbReference>
<dbReference type="PDB" id="5ED6">
    <property type="method" value="X-ray"/>
    <property type="resolution" value="1.52 A"/>
    <property type="chains" value="A/B=1-126"/>
</dbReference>
<dbReference type="PDB" id="5EMT">
    <property type="method" value="X-ray"/>
    <property type="resolution" value="1.50 A"/>
    <property type="chains" value="A/B=1-126"/>
</dbReference>
<dbReference type="PDB" id="5I2E">
    <property type="method" value="X-ray"/>
    <property type="resolution" value="1.60 A"/>
    <property type="chains" value="A/B=1-126"/>
</dbReference>
<dbReference type="PDB" id="5I2F">
    <property type="method" value="X-ray"/>
    <property type="resolution" value="1.25 A"/>
    <property type="chains" value="A/B=1-126"/>
</dbReference>
<dbReference type="PDB" id="5IPB">
    <property type="method" value="X-ray"/>
    <property type="resolution" value="1.55 A"/>
    <property type="chains" value="A/B=1-126"/>
</dbReference>
<dbReference type="PDB" id="5IPC">
    <property type="method" value="X-ray"/>
    <property type="resolution" value="1.30 A"/>
    <property type="chains" value="A/B=1-126"/>
</dbReference>
<dbReference type="PDB" id="5IPD">
    <property type="method" value="X-ray"/>
    <property type="resolution" value="1.75 A"/>
    <property type="chains" value="A/B=1-126"/>
</dbReference>
<dbReference type="PDB" id="5IPE">
    <property type="method" value="X-ray"/>
    <property type="resolution" value="1.45 A"/>
    <property type="chains" value="A/B=1-126"/>
</dbReference>
<dbReference type="PDB" id="5KLY">
    <property type="method" value="X-ray"/>
    <property type="resolution" value="1.30 A"/>
    <property type="chains" value="A/B=1-126"/>
</dbReference>
<dbReference type="PDB" id="5KLZ">
    <property type="method" value="X-ray"/>
    <property type="resolution" value="1.50 A"/>
    <property type="chains" value="A/B=1-126"/>
</dbReference>
<dbReference type="PDB" id="5KM0">
    <property type="method" value="X-ray"/>
    <property type="resolution" value="1.53 A"/>
    <property type="chains" value="A/B/C/D=1-126"/>
</dbReference>
<dbReference type="PDB" id="5KM1">
    <property type="method" value="X-ray"/>
    <property type="resolution" value="1.65 A"/>
    <property type="chains" value="A/B=1-126"/>
</dbReference>
<dbReference type="PDB" id="5KM2">
    <property type="method" value="X-ray"/>
    <property type="resolution" value="1.25 A"/>
    <property type="chains" value="A/B=1-126"/>
</dbReference>
<dbReference type="PDB" id="5KM3">
    <property type="method" value="X-ray"/>
    <property type="resolution" value="1.20 A"/>
    <property type="chains" value="A/B=1-126"/>
</dbReference>
<dbReference type="PDB" id="5KM4">
    <property type="method" value="X-ray"/>
    <property type="resolution" value="1.40 A"/>
    <property type="chains" value="A/B=1-126"/>
</dbReference>
<dbReference type="PDB" id="5KM6">
    <property type="method" value="X-ray"/>
    <property type="resolution" value="1.60 A"/>
    <property type="chains" value="A=1-126"/>
</dbReference>
<dbReference type="PDB" id="5KMA">
    <property type="method" value="X-ray"/>
    <property type="resolution" value="1.55 A"/>
    <property type="chains" value="A/B=1-126"/>
</dbReference>
<dbReference type="PDB" id="5KMB">
    <property type="method" value="X-ray"/>
    <property type="resolution" value="1.60 A"/>
    <property type="chains" value="A/B=1-126"/>
</dbReference>
<dbReference type="PDB" id="5KMC">
    <property type="method" value="X-ray"/>
    <property type="resolution" value="1.35 A"/>
    <property type="chains" value="A/B=1-126"/>
</dbReference>
<dbReference type="PDB" id="5O8I">
    <property type="method" value="X-ray"/>
    <property type="resolution" value="1.27 A"/>
    <property type="chains" value="A/B=1-126"/>
</dbReference>
<dbReference type="PDB" id="5WA8">
    <property type="method" value="X-ray"/>
    <property type="resolution" value="1.30 A"/>
    <property type="chains" value="A/B=1-126"/>
</dbReference>
<dbReference type="PDB" id="5WA9">
    <property type="method" value="X-ray"/>
    <property type="resolution" value="1.15 A"/>
    <property type="chains" value="A/B=1-126"/>
</dbReference>
<dbReference type="PDB" id="5WAA">
    <property type="method" value="X-ray"/>
    <property type="resolution" value="1.10 A"/>
    <property type="chains" value="A/B=1-126"/>
</dbReference>
<dbReference type="PDB" id="6B42">
    <property type="method" value="X-ray"/>
    <property type="resolution" value="1.13 A"/>
    <property type="chains" value="A=1-126"/>
</dbReference>
<dbReference type="PDB" id="6G9Z">
    <property type="method" value="X-ray"/>
    <property type="resolution" value="1.43 A"/>
    <property type="chains" value="A/B=1-126"/>
</dbReference>
<dbReference type="PDB" id="6J53">
    <property type="method" value="X-ray"/>
    <property type="resolution" value="1.52 A"/>
    <property type="chains" value="A/B=1-126"/>
</dbReference>
<dbReference type="PDB" id="6J58">
    <property type="method" value="X-ray"/>
    <property type="resolution" value="1.52 A"/>
    <property type="chains" value="A/B=1-126"/>
</dbReference>
<dbReference type="PDB" id="6J5S">
    <property type="method" value="X-ray"/>
    <property type="resolution" value="1.02 A"/>
    <property type="chains" value="A/B=1-126"/>
</dbReference>
<dbReference type="PDB" id="6J5Z">
    <property type="method" value="X-ray"/>
    <property type="resolution" value="1.30 A"/>
    <property type="chains" value="A/B/C/D=1-126"/>
</dbReference>
<dbReference type="PDB" id="6J64">
    <property type="method" value="X-ray"/>
    <property type="resolution" value="0.95 A"/>
    <property type="chains" value="A/B=1-126"/>
</dbReference>
<dbReference type="PDB" id="6J65">
    <property type="method" value="X-ray"/>
    <property type="resolution" value="1.42 A"/>
    <property type="chains" value="A/B/D/E=1-126"/>
</dbReference>
<dbReference type="PDB" id="6N3V">
    <property type="method" value="X-ray"/>
    <property type="resolution" value="1.45 A"/>
    <property type="chains" value="A/B=1-126"/>
</dbReference>
<dbReference type="PDB" id="6N3W">
    <property type="method" value="X-ray"/>
    <property type="resolution" value="1.75 A"/>
    <property type="chains" value="A/B=1-126"/>
</dbReference>
<dbReference type="PDB" id="6N3X">
    <property type="method" value="X-ray"/>
    <property type="resolution" value="1.10 A"/>
    <property type="chains" value="A/B=1-126"/>
</dbReference>
<dbReference type="PDB" id="6N3Y">
    <property type="method" value="X-ray"/>
    <property type="resolution" value="1.80 A"/>
    <property type="chains" value="A/B=1-126"/>
</dbReference>
<dbReference type="PDB" id="6YQM">
    <property type="method" value="X-ray"/>
    <property type="resolution" value="1.02 A"/>
    <property type="chains" value="AAA/BBB=1-126"/>
</dbReference>
<dbReference type="PDB" id="7Q2U">
    <property type="method" value="X-ray"/>
    <property type="resolution" value="2.27 A"/>
    <property type="chains" value="AAA/BBB/CCC/DDD=1-126"/>
</dbReference>
<dbReference type="PDB" id="8P8P">
    <property type="method" value="X-ray"/>
    <property type="resolution" value="1.90 A"/>
    <property type="chains" value="A/B=1-126"/>
</dbReference>
<dbReference type="PDB" id="8PA6">
    <property type="method" value="X-ray"/>
    <property type="resolution" value="1.58 A"/>
    <property type="chains" value="A/B=1-126"/>
</dbReference>
<dbReference type="PDB" id="8PA9">
    <property type="method" value="X-ray"/>
    <property type="resolution" value="1.50 A"/>
    <property type="chains" value="A/B=1-126"/>
</dbReference>
<dbReference type="PDB" id="8PAF">
    <property type="method" value="X-ray"/>
    <property type="resolution" value="2.10 A"/>
    <property type="chains" value="A/B=1-126"/>
</dbReference>
<dbReference type="PDB" id="8PAI">
    <property type="method" value="X-ray"/>
    <property type="resolution" value="1.80 A"/>
    <property type="chains" value="A/B=1-126"/>
</dbReference>
<dbReference type="PDB" id="8PWK">
    <property type="method" value="X-ray"/>
    <property type="resolution" value="2.10 A"/>
    <property type="chains" value="A/B=1-126"/>
</dbReference>
<dbReference type="PDB" id="8WZD">
    <property type="method" value="X-ray"/>
    <property type="resolution" value="2.05 A"/>
    <property type="chains" value="A/B=1-126"/>
</dbReference>
<dbReference type="PDBsum" id="1AV5"/>
<dbReference type="PDBsum" id="1KPA"/>
<dbReference type="PDBsum" id="1KPB"/>
<dbReference type="PDBsum" id="1KPC"/>
<dbReference type="PDBsum" id="1KPE"/>
<dbReference type="PDBsum" id="1KPF"/>
<dbReference type="PDBsum" id="3TW2"/>
<dbReference type="PDBsum" id="4EQE"/>
<dbReference type="PDBsum" id="4EQG"/>
<dbReference type="PDBsum" id="4EQH"/>
<dbReference type="PDBsum" id="4ZKL"/>
<dbReference type="PDBsum" id="4ZKV"/>
<dbReference type="PDBsum" id="5ED3"/>
<dbReference type="PDBsum" id="5ED6"/>
<dbReference type="PDBsum" id="5EMT"/>
<dbReference type="PDBsum" id="5I2E"/>
<dbReference type="PDBsum" id="5I2F"/>
<dbReference type="PDBsum" id="5IPB"/>
<dbReference type="PDBsum" id="5IPC"/>
<dbReference type="PDBsum" id="5IPD"/>
<dbReference type="PDBsum" id="5IPE"/>
<dbReference type="PDBsum" id="5KLY"/>
<dbReference type="PDBsum" id="5KLZ"/>
<dbReference type="PDBsum" id="5KM0"/>
<dbReference type="PDBsum" id="5KM1"/>
<dbReference type="PDBsum" id="5KM2"/>
<dbReference type="PDBsum" id="5KM3"/>
<dbReference type="PDBsum" id="5KM4"/>
<dbReference type="PDBsum" id="5KM6"/>
<dbReference type="PDBsum" id="5KMA"/>
<dbReference type="PDBsum" id="5KMB"/>
<dbReference type="PDBsum" id="5KMC"/>
<dbReference type="PDBsum" id="5O8I"/>
<dbReference type="PDBsum" id="5WA8"/>
<dbReference type="PDBsum" id="5WA9"/>
<dbReference type="PDBsum" id="5WAA"/>
<dbReference type="PDBsum" id="6B42"/>
<dbReference type="PDBsum" id="6G9Z"/>
<dbReference type="PDBsum" id="6J53"/>
<dbReference type="PDBsum" id="6J58"/>
<dbReference type="PDBsum" id="6J5S"/>
<dbReference type="PDBsum" id="6J5Z"/>
<dbReference type="PDBsum" id="6J64"/>
<dbReference type="PDBsum" id="6J65"/>
<dbReference type="PDBsum" id="6N3V"/>
<dbReference type="PDBsum" id="6N3W"/>
<dbReference type="PDBsum" id="6N3X"/>
<dbReference type="PDBsum" id="6N3Y"/>
<dbReference type="PDBsum" id="6YQM"/>
<dbReference type="PDBsum" id="7Q2U"/>
<dbReference type="PDBsum" id="8P8P"/>
<dbReference type="PDBsum" id="8PA6"/>
<dbReference type="PDBsum" id="8PA9"/>
<dbReference type="PDBsum" id="8PAF"/>
<dbReference type="PDBsum" id="8PAI"/>
<dbReference type="PDBsum" id="8PWK"/>
<dbReference type="PDBsum" id="8WZD"/>
<dbReference type="SMR" id="P49773"/>
<dbReference type="BioGRID" id="109341">
    <property type="interactions" value="193"/>
</dbReference>
<dbReference type="CORUM" id="P49773"/>
<dbReference type="FunCoup" id="P49773">
    <property type="interactions" value="1480"/>
</dbReference>
<dbReference type="IntAct" id="P49773">
    <property type="interactions" value="45"/>
</dbReference>
<dbReference type="MINT" id="P49773"/>
<dbReference type="STRING" id="9606.ENSP00000304229"/>
<dbReference type="BindingDB" id="P49773"/>
<dbReference type="ChEMBL" id="CHEMBL5878"/>
<dbReference type="DrugBank" id="DB02162">
    <property type="generic name" value="5'-O-(N-Ethyl-Sulfamoyl)Adenosine"/>
</dbReference>
<dbReference type="DrugBank" id="DB03349">
    <property type="generic name" value="8-Bromo-Adenosine-5'-Monophosphate"/>
</dbReference>
<dbReference type="DrugBank" id="DB00131">
    <property type="generic name" value="Adenosine phosphate"/>
</dbReference>
<dbReference type="DrugBank" id="DB02183">
    <property type="generic name" value="Adenosine-5'-ditungstate"/>
</dbReference>
<dbReference type="DrugBank" id="DB01972">
    <property type="generic name" value="Guanosine-5'-Monophosphate"/>
</dbReference>
<dbReference type="DrugBank" id="DB08934">
    <property type="generic name" value="Sofosbuvir"/>
</dbReference>
<dbReference type="GlyGen" id="P49773">
    <property type="glycosylation" value="1 site, 1 O-linked glycan (1 site)"/>
</dbReference>
<dbReference type="iPTMnet" id="P49773"/>
<dbReference type="MetOSite" id="P49773"/>
<dbReference type="PhosphoSitePlus" id="P49773"/>
<dbReference type="SwissPalm" id="P49773"/>
<dbReference type="BioMuta" id="HINT1"/>
<dbReference type="DMDM" id="1708543"/>
<dbReference type="OGP" id="P49773"/>
<dbReference type="jPOST" id="P49773"/>
<dbReference type="MassIVE" id="P49773"/>
<dbReference type="PaxDb" id="9606-ENSP00000304229"/>
<dbReference type="PeptideAtlas" id="P49773"/>
<dbReference type="ProteomicsDB" id="56116"/>
<dbReference type="Pumba" id="P49773"/>
<dbReference type="TopDownProteomics" id="P49773"/>
<dbReference type="Antibodypedia" id="25857">
    <property type="antibodies" value="289 antibodies from 37 providers"/>
</dbReference>
<dbReference type="DNASU" id="3094"/>
<dbReference type="Ensembl" id="ENST00000304043.10">
    <property type="protein sequence ID" value="ENSP00000304229.5"/>
    <property type="gene ID" value="ENSG00000169567.13"/>
</dbReference>
<dbReference type="GeneID" id="3094"/>
<dbReference type="KEGG" id="hsa:3094"/>
<dbReference type="MANE-Select" id="ENST00000304043.10">
    <property type="protein sequence ID" value="ENSP00000304229.5"/>
    <property type="RefSeq nucleotide sequence ID" value="NM_005340.7"/>
    <property type="RefSeq protein sequence ID" value="NP_005331.1"/>
</dbReference>
<dbReference type="UCSC" id="uc003kve.5">
    <property type="organism name" value="human"/>
</dbReference>
<dbReference type="AGR" id="HGNC:4912"/>
<dbReference type="CTD" id="3094"/>
<dbReference type="DisGeNET" id="3094"/>
<dbReference type="GeneCards" id="HINT1"/>
<dbReference type="GeneReviews" id="HINT1"/>
<dbReference type="HGNC" id="HGNC:4912">
    <property type="gene designation" value="HINT1"/>
</dbReference>
<dbReference type="HPA" id="ENSG00000169567">
    <property type="expression patterns" value="Low tissue specificity"/>
</dbReference>
<dbReference type="MalaCards" id="HINT1"/>
<dbReference type="MIM" id="137200">
    <property type="type" value="phenotype"/>
</dbReference>
<dbReference type="MIM" id="601314">
    <property type="type" value="gene"/>
</dbReference>
<dbReference type="neXtProt" id="NX_P49773"/>
<dbReference type="OpenTargets" id="ENSG00000169567"/>
<dbReference type="Orphanet" id="324442">
    <property type="disease" value="Autosomal recessive axonal neuropathy with neuromyotonia"/>
</dbReference>
<dbReference type="PharmGKB" id="PA29286"/>
<dbReference type="VEuPathDB" id="HostDB:ENSG00000169567"/>
<dbReference type="eggNOG" id="KOG3275">
    <property type="taxonomic scope" value="Eukaryota"/>
</dbReference>
<dbReference type="GeneTree" id="ENSGT00940000154451"/>
<dbReference type="HOGENOM" id="CLU_056776_8_1_1"/>
<dbReference type="InParanoid" id="P49773"/>
<dbReference type="OMA" id="LAFMDVM"/>
<dbReference type="OrthoDB" id="672793at2759"/>
<dbReference type="PAN-GO" id="P49773">
    <property type="GO annotations" value="4 GO annotations based on evolutionary models"/>
</dbReference>
<dbReference type="PhylomeDB" id="P49773"/>
<dbReference type="TreeFam" id="TF314862"/>
<dbReference type="PathwayCommons" id="P49773"/>
<dbReference type="Reactome" id="R-HSA-9824594">
    <property type="pathway name" value="Regulation of MITF-M-dependent genes involved in apoptosis"/>
</dbReference>
<dbReference type="Reactome" id="R-HSA-9825892">
    <property type="pathway name" value="Regulation of MITF-M-dependent genes involved in cell cycle and proliferation"/>
</dbReference>
<dbReference type="Reactome" id="R-HSA-9856649">
    <property type="pathway name" value="Transcriptional and post-translational regulation of MITF-M expression and activity"/>
</dbReference>
<dbReference type="SABIO-RK" id="P49773"/>
<dbReference type="SignaLink" id="P49773"/>
<dbReference type="BioGRID-ORCS" id="3094">
    <property type="hits" value="10 hits in 1124 CRISPR screens"/>
</dbReference>
<dbReference type="CD-CODE" id="91857CE7">
    <property type="entry name" value="Nucleolus"/>
</dbReference>
<dbReference type="ChiTaRS" id="HINT1">
    <property type="organism name" value="human"/>
</dbReference>
<dbReference type="EvolutionaryTrace" id="P49773"/>
<dbReference type="GeneWiki" id="HINT1"/>
<dbReference type="GenomeRNAi" id="3094"/>
<dbReference type="Pharos" id="P49773">
    <property type="development level" value="Tchem"/>
</dbReference>
<dbReference type="PRO" id="PR:P49773"/>
<dbReference type="Proteomes" id="UP000005640">
    <property type="component" value="Chromosome 5"/>
</dbReference>
<dbReference type="RNAct" id="P49773">
    <property type="molecule type" value="protein"/>
</dbReference>
<dbReference type="Bgee" id="ENSG00000169567">
    <property type="expression patterns" value="Expressed in endothelial cell and 213 other cell types or tissues"/>
</dbReference>
<dbReference type="ExpressionAtlas" id="P49773">
    <property type="expression patterns" value="baseline and differential"/>
</dbReference>
<dbReference type="GO" id="GO:0005737">
    <property type="term" value="C:cytoplasm"/>
    <property type="evidence" value="ECO:0000314"/>
    <property type="project" value="UniProtKB"/>
</dbReference>
<dbReference type="GO" id="GO:0005856">
    <property type="term" value="C:cytoskeleton"/>
    <property type="evidence" value="ECO:0000304"/>
    <property type="project" value="ProtInc"/>
</dbReference>
<dbReference type="GO" id="GO:0005829">
    <property type="term" value="C:cytosol"/>
    <property type="evidence" value="ECO:0000314"/>
    <property type="project" value="HPA"/>
</dbReference>
<dbReference type="GO" id="GO:0070062">
    <property type="term" value="C:extracellular exosome"/>
    <property type="evidence" value="ECO:0007005"/>
    <property type="project" value="UniProtKB"/>
</dbReference>
<dbReference type="GO" id="GO:0000118">
    <property type="term" value="C:histone deacetylase complex"/>
    <property type="evidence" value="ECO:0000314"/>
    <property type="project" value="UniProtKB"/>
</dbReference>
<dbReference type="GO" id="GO:0005654">
    <property type="term" value="C:nucleoplasm"/>
    <property type="evidence" value="ECO:0000314"/>
    <property type="project" value="HPA"/>
</dbReference>
<dbReference type="GO" id="GO:0005634">
    <property type="term" value="C:nucleus"/>
    <property type="evidence" value="ECO:0000314"/>
    <property type="project" value="UniProtKB"/>
</dbReference>
<dbReference type="GO" id="GO:0005886">
    <property type="term" value="C:plasma membrane"/>
    <property type="evidence" value="ECO:0000314"/>
    <property type="project" value="HPA"/>
</dbReference>
<dbReference type="GO" id="GO:0043530">
    <property type="term" value="F:adenosine 5'-monophosphoramidase activity"/>
    <property type="evidence" value="ECO:0000314"/>
    <property type="project" value="UniProtKB"/>
</dbReference>
<dbReference type="GO" id="GO:0016929">
    <property type="term" value="F:deSUMOylase activity"/>
    <property type="evidence" value="ECO:0000315"/>
    <property type="project" value="UniProtKB"/>
</dbReference>
<dbReference type="GO" id="GO:0016787">
    <property type="term" value="F:hydrolase activity"/>
    <property type="evidence" value="ECO:0000314"/>
    <property type="project" value="UniProtKB"/>
</dbReference>
<dbReference type="GO" id="GO:0000166">
    <property type="term" value="F:nucleotide binding"/>
    <property type="evidence" value="ECO:0007669"/>
    <property type="project" value="UniProtKB-KW"/>
</dbReference>
<dbReference type="GO" id="GO:0005080">
    <property type="term" value="F:protein kinase C binding"/>
    <property type="evidence" value="ECO:0000304"/>
    <property type="project" value="ProtInc"/>
</dbReference>
<dbReference type="GO" id="GO:0072332">
    <property type="term" value="P:intrinsic apoptotic signaling pathway by p53 class mediator"/>
    <property type="evidence" value="ECO:0000315"/>
    <property type="project" value="UniProtKB"/>
</dbReference>
<dbReference type="GO" id="GO:0050850">
    <property type="term" value="P:positive regulation of calcium-mediated signaling"/>
    <property type="evidence" value="ECO:0007669"/>
    <property type="project" value="Ensembl"/>
</dbReference>
<dbReference type="GO" id="GO:0016926">
    <property type="term" value="P:protein desumoylation"/>
    <property type="evidence" value="ECO:0000315"/>
    <property type="project" value="UniProtKB"/>
</dbReference>
<dbReference type="GO" id="GO:0006508">
    <property type="term" value="P:proteolysis"/>
    <property type="evidence" value="ECO:0007669"/>
    <property type="project" value="UniProtKB-KW"/>
</dbReference>
<dbReference type="GO" id="GO:0009154">
    <property type="term" value="P:purine ribonucleotide catabolic process"/>
    <property type="evidence" value="ECO:0000314"/>
    <property type="project" value="UniProtKB"/>
</dbReference>
<dbReference type="GO" id="GO:0006355">
    <property type="term" value="P:regulation of DNA-templated transcription"/>
    <property type="evidence" value="ECO:0000315"/>
    <property type="project" value="UniProtKB"/>
</dbReference>
<dbReference type="GO" id="GO:0007165">
    <property type="term" value="P:signal transduction"/>
    <property type="evidence" value="ECO:0000304"/>
    <property type="project" value="ProtInc"/>
</dbReference>
<dbReference type="CDD" id="cd01276">
    <property type="entry name" value="PKCI_related"/>
    <property type="match status" value="1"/>
</dbReference>
<dbReference type="FunFam" id="3.30.428.10:FF:000005">
    <property type="entry name" value="Histidine triad nucleotide-binding protein 1"/>
    <property type="match status" value="1"/>
</dbReference>
<dbReference type="Gene3D" id="3.30.428.10">
    <property type="entry name" value="HIT-like"/>
    <property type="match status" value="1"/>
</dbReference>
<dbReference type="InterPro" id="IPR019808">
    <property type="entry name" value="Histidine_triad_CS"/>
</dbReference>
<dbReference type="InterPro" id="IPR001310">
    <property type="entry name" value="Histidine_triad_HIT"/>
</dbReference>
<dbReference type="InterPro" id="IPR011146">
    <property type="entry name" value="HIT-like"/>
</dbReference>
<dbReference type="InterPro" id="IPR036265">
    <property type="entry name" value="HIT-like_sf"/>
</dbReference>
<dbReference type="PANTHER" id="PTHR23089">
    <property type="entry name" value="HISTIDINE TRIAD HIT PROTEIN"/>
    <property type="match status" value="1"/>
</dbReference>
<dbReference type="Pfam" id="PF01230">
    <property type="entry name" value="HIT"/>
    <property type="match status" value="1"/>
</dbReference>
<dbReference type="PRINTS" id="PR00332">
    <property type="entry name" value="HISTRIAD"/>
</dbReference>
<dbReference type="SUPFAM" id="SSF54197">
    <property type="entry name" value="HIT-like"/>
    <property type="match status" value="1"/>
</dbReference>
<dbReference type="PROSITE" id="PS00892">
    <property type="entry name" value="HIT_1"/>
    <property type="match status" value="1"/>
</dbReference>
<dbReference type="PROSITE" id="PS51084">
    <property type="entry name" value="HIT_2"/>
    <property type="match status" value="1"/>
</dbReference>
<name>HINT1_HUMAN</name>
<accession>P49773</accession>
<accession>Q9H5W8</accession>
<evidence type="ECO:0000250" key="1">
    <source>
        <dbReference type="UniProtKB" id="P70349"/>
    </source>
</evidence>
<evidence type="ECO:0000250" key="2">
    <source>
        <dbReference type="UniProtKB" id="P80912"/>
    </source>
</evidence>
<evidence type="ECO:0000255" key="3">
    <source>
        <dbReference type="PROSITE-ProRule" id="PRU00464"/>
    </source>
</evidence>
<evidence type="ECO:0000269" key="4">
    <source>
    </source>
</evidence>
<evidence type="ECO:0000269" key="5">
    <source>
    </source>
</evidence>
<evidence type="ECO:0000269" key="6">
    <source>
    </source>
</evidence>
<evidence type="ECO:0000269" key="7">
    <source>
    </source>
</evidence>
<evidence type="ECO:0000269" key="8">
    <source>
    </source>
</evidence>
<evidence type="ECO:0000269" key="9">
    <source>
    </source>
</evidence>
<evidence type="ECO:0000269" key="10">
    <source>
    </source>
</evidence>
<evidence type="ECO:0000269" key="11">
    <source>
    </source>
</evidence>
<evidence type="ECO:0000269" key="12">
    <source>
    </source>
</evidence>
<evidence type="ECO:0000269" key="13">
    <source>
    </source>
</evidence>
<evidence type="ECO:0000269" key="14">
    <source>
    </source>
</evidence>
<evidence type="ECO:0000269" key="15">
    <source>
    </source>
</evidence>
<evidence type="ECO:0000269" key="16">
    <source>
    </source>
</evidence>
<evidence type="ECO:0000269" key="17">
    <source>
    </source>
</evidence>
<evidence type="ECO:0000269" key="18">
    <source>
    </source>
</evidence>
<evidence type="ECO:0000269" key="19">
    <source>
    </source>
</evidence>
<evidence type="ECO:0000269" key="20">
    <source>
    </source>
</evidence>
<evidence type="ECO:0000269" key="21">
    <source>
    </source>
</evidence>
<evidence type="ECO:0000269" key="22">
    <source>
    </source>
</evidence>
<evidence type="ECO:0000269" key="23">
    <source>
    </source>
</evidence>
<evidence type="ECO:0000269" key="24">
    <source>
    </source>
</evidence>
<evidence type="ECO:0000269" key="25">
    <source>
    </source>
</evidence>
<evidence type="ECO:0000305" key="26"/>
<evidence type="ECO:0000305" key="27">
    <source>
    </source>
</evidence>
<evidence type="ECO:0000305" key="28">
    <source>
    </source>
</evidence>
<evidence type="ECO:0007744" key="29">
    <source>
        <dbReference type="PDB" id="3TW2"/>
    </source>
</evidence>
<evidence type="ECO:0007744" key="30">
    <source>
    </source>
</evidence>
<evidence type="ECO:0007744" key="31">
    <source>
    </source>
</evidence>
<evidence type="ECO:0007829" key="32">
    <source>
        <dbReference type="PDB" id="6J64"/>
    </source>
</evidence>
<organism>
    <name type="scientific">Homo sapiens</name>
    <name type="common">Human</name>
    <dbReference type="NCBI Taxonomy" id="9606"/>
    <lineage>
        <taxon>Eukaryota</taxon>
        <taxon>Metazoa</taxon>
        <taxon>Chordata</taxon>
        <taxon>Craniata</taxon>
        <taxon>Vertebrata</taxon>
        <taxon>Euteleostomi</taxon>
        <taxon>Mammalia</taxon>
        <taxon>Eutheria</taxon>
        <taxon>Euarchontoglires</taxon>
        <taxon>Primates</taxon>
        <taxon>Haplorrhini</taxon>
        <taxon>Catarrhini</taxon>
        <taxon>Hominidae</taxon>
        <taxon>Homo</taxon>
    </lineage>
</organism>
<comment type="function">
    <text evidence="2 6 7 8 9 10 11 12 13 16 17 18 19 20 21">Exhibits adenosine 5'-monophosphoramidase activity, hydrolyzing purine nucleotide phosphoramidates with a single phosphate group such as adenosine 5'monophosphoramidate (AMP-NH2) to yield AMP and NH2 (PubMed:15703176, PubMed:16835243, PubMed:17217311, PubMed:17337452, PubMed:22329685, PubMed:23614568, PubMed:28691797, PubMed:29787766, PubMed:31990367). Hydrolyzes adenosine 5'monophosphomorpholidate (AMP-morpholidate) and guanosine 5'monophosphomorpholidate (GMP-morpholidate) (PubMed:15703176, PubMed:16835243). Hydrolyzes lysyl-AMP (AMP-N-epsilon-(N-alpha-acetyl lysine methyl ester)) generated by lysine tRNA ligase, as well as Met-AMP, His-AMP and Asp-AMP, lysyl-GMP (GMP-N-epsilon-(N-alpha-acetyl lysine methyl ester)) and AMP-N-alanine methyl ester (PubMed:15703176, PubMed:17337452, PubMed:22329685). Hydrolyzes 3-indolepropionic acyl-adenylate, tryptamine adenosine phosphoramidate monoester and other fluorogenic purine nucleoside tryptamine phosphoramidates in vitro (PubMed:17217311, PubMed:17337452, PubMed:23614568, PubMed:28691797, PubMed:29787766, PubMed:31990367). Can also convert adenosine 5'-O-phosphorothioate and guanosine 5'-O-phosphorothioate to the corresponding nucleoside 5'-O-phosphates with concomitant release of hydrogen sulfide (PubMed:30772266). In addition, functions as scaffolding protein that modulates transcriptional activation by the LEF1/TCF1-CTNNB1 complex and by the complex formed with MITF and CTNNB1 (PubMed:16014379, PubMed:22647378). Modulates p53/TP53 levels and p53/TP53-mediated apoptosis (PubMed:16835243). Modulates proteasomal degradation of target proteins by the SCF (SKP2-CUL1-F-box protein) E3 ubiquitin-protein ligase complex (PubMed:19112177). Also exhibits SUMO-specific isopeptidase activity, deconjugating SUMO1 from RGS17 (PubMed:31088288). Deconjugates SUMO1 from RANGAP1 (By similarity).</text>
</comment>
<comment type="catalytic activity">
    <reaction evidence="6 8 9 10 12 16 17 18 21">
        <text>adenosine 5'-phosphoramidate + H2O = AMP + NH4(+)</text>
        <dbReference type="Rhea" id="RHEA:67916"/>
        <dbReference type="ChEBI" id="CHEBI:15377"/>
        <dbReference type="ChEBI" id="CHEBI:28938"/>
        <dbReference type="ChEBI" id="CHEBI:57890"/>
        <dbReference type="ChEBI" id="CHEBI:456215"/>
    </reaction>
</comment>
<comment type="biophysicochemical properties">
    <kinetics>
        <KM evidence="10 16">0.04 uM for 3-indolepropionic acyl-adenylate</KM>
        <KM evidence="10 16">0.13 uM for tryptamine adenosine phosphoramidate</KM>
        <KM evidence="18">0.1 uM for tryptamine adenosine phosphoramidate</KM>
    </kinetics>
</comment>
<comment type="subunit">
    <text evidence="1 4 6 7 8 10 11 12 13 14 18 22 24">Homodimer. Interacts with CDK7. Interacts with RUVBL1 and RUVBL2 and is associated with the LEF1/TCF1-CTNNB1 complex and with a KAT5 histone acetyltransferase complex. Identified in a complex with MITF and CTNNB1. Interacts with CDC34 and RBX1, and is part of a SCF (SKP2-CUL1-F-box protein) E3 ubiquitin-protein ligase complex (PubMed:19112177). Interacts with SUMO1, SUMO2 and RGS17 (By similarity). Interacts with the Ten-1 ICD form of TENM1 (By similarity). Interacts with CALM1; interaction increases in the presence of calcium ions (By similarity).</text>
</comment>
<comment type="interaction">
    <interactant intactId="EBI-1054330">
        <id>P49773</id>
    </interactant>
    <interactant intactId="EBI-11523759">
        <id>Q8N684-3</id>
        <label>CPSF7</label>
    </interactant>
    <organismsDiffer>false</organismsDiffer>
    <experiments>3</experiments>
</comment>
<comment type="subcellular location">
    <subcellularLocation>
        <location evidence="4 7 11 23">Cytoplasm</location>
    </subcellularLocation>
    <subcellularLocation>
        <location evidence="4 7 11 25">Nucleus</location>
    </subcellularLocation>
    <text evidence="4">Interaction with CDK7 leads to a more nuclear localization.</text>
</comment>
<comment type="tissue specificity">
    <text>Widely expressed.</text>
</comment>
<comment type="disease" evidence="8 15 17 18 20">
    <disease id="DI-03603">
        <name>Neuromyotonia and axonal neuropathy, autosomal recessive</name>
        <acronym>NMAN</acronym>
        <description>An autosomal recessive neurologic disorder characterized by onset in the first or second decade of a peripheral axonal neuropathy predominantly affecting motor more than sensory nerves. The axonal neuropathy is reminiscent of Charcot-Marie-Tooth disease type 2 and distal hereditary motor neuropathy. Individuals with NMAN also have delayed muscle relaxation and action myotonia associated with neuromyotonic discharges on needle EMG resulting from hyperexcitability of the peripheral nerves.</description>
        <dbReference type="MIM" id="137200"/>
    </disease>
    <text>The disease is caused by variants affecting the gene represented in this entry.</text>
</comment>
<comment type="similarity">
    <text evidence="26">Belongs to the HINT family.</text>
</comment>
<comment type="caution">
    <text evidence="26">Was originally thought to be a protein kinase C inhibitor and to bind zinc in solution. Both seem to be incorrect.</text>
</comment>